<comment type="function">
    <text evidence="1">Component of the CCR4-NOT complex which is one of the major cellular mRNA deadenylases and is linked to various cellular processes including bulk mRNA degradation, miRNA-mediated repression, translational repression during translational initiation and general transcription regulation. Additional complex functions may be a consequence of its influence on mRNA expression. Is not required for association of CNOT7 to the CCR4-NOT complex (By similarity).</text>
</comment>
<comment type="subunit">
    <text evidence="1">Component of the CCR4-NOT complex. cnot10 and cnot11 form a subcomplex docked to the cnot1 scaffold (By similarity).</text>
</comment>
<comment type="subcellular location">
    <subcellularLocation>
        <location evidence="1">Cytoplasm</location>
    </subcellularLocation>
    <subcellularLocation>
        <location evidence="1">Nucleus</location>
    </subcellularLocation>
</comment>
<comment type="similarity">
    <text evidence="3">Belongs to the CNOT10 family.</text>
</comment>
<organism>
    <name type="scientific">Xenopus laevis</name>
    <name type="common">African clawed frog</name>
    <dbReference type="NCBI Taxonomy" id="8355"/>
    <lineage>
        <taxon>Eukaryota</taxon>
        <taxon>Metazoa</taxon>
        <taxon>Chordata</taxon>
        <taxon>Craniata</taxon>
        <taxon>Vertebrata</taxon>
        <taxon>Euteleostomi</taxon>
        <taxon>Amphibia</taxon>
        <taxon>Batrachia</taxon>
        <taxon>Anura</taxon>
        <taxon>Pipoidea</taxon>
        <taxon>Pipidae</taxon>
        <taxon>Xenopodinae</taxon>
        <taxon>Xenopus</taxon>
        <taxon>Xenopus</taxon>
    </lineage>
</organism>
<gene>
    <name type="primary">cnot10-b</name>
</gene>
<keyword id="KW-0963">Cytoplasm</keyword>
<keyword id="KW-0539">Nucleus</keyword>
<keyword id="KW-1185">Reference proteome</keyword>
<keyword id="KW-0943">RNA-mediated gene silencing</keyword>
<keyword id="KW-0804">Transcription</keyword>
<keyword id="KW-0805">Transcription regulation</keyword>
<keyword id="KW-0810">Translation regulation</keyword>
<protein>
    <recommendedName>
        <fullName>CCR4-NOT transcription complex subunit 10-B</fullName>
    </recommendedName>
</protein>
<proteinExistence type="evidence at transcript level"/>
<name>CN10B_XENLA</name>
<feature type="chain" id="PRO_0000314586" description="CCR4-NOT transcription complex subunit 10-B">
    <location>
        <begin position="1"/>
        <end position="748"/>
    </location>
</feature>
<feature type="region of interest" description="Disordered" evidence="2">
    <location>
        <begin position="1"/>
        <end position="25"/>
    </location>
</feature>
<feature type="region of interest" description="Disordered" evidence="2">
    <location>
        <begin position="483"/>
        <end position="524"/>
    </location>
</feature>
<feature type="region of interest" description="Disordered" evidence="2">
    <location>
        <begin position="605"/>
        <end position="634"/>
    </location>
</feature>
<feature type="compositionally biased region" description="Basic and acidic residues" evidence="2">
    <location>
        <begin position="1"/>
        <end position="16"/>
    </location>
</feature>
<feature type="compositionally biased region" description="Polar residues" evidence="2">
    <location>
        <begin position="487"/>
        <end position="509"/>
    </location>
</feature>
<feature type="compositionally biased region" description="Polar residues" evidence="2">
    <location>
        <begin position="605"/>
        <end position="615"/>
    </location>
</feature>
<reference key="1">
    <citation type="submission" date="2004-04" db="EMBL/GenBank/DDBJ databases">
        <authorList>
            <consortium name="NIH - Xenopus Gene Collection (XGC) project"/>
        </authorList>
    </citation>
    <scope>NUCLEOTIDE SEQUENCE [LARGE SCALE MRNA]</scope>
    <source>
        <tissue>Embryo</tissue>
    </source>
</reference>
<sequence>MAADKAGEQGAEKHEGSANCSGISDQEKELSRSALQAFTAGNYEACLQHLGELKEINKDDYKVILNAAVAEFYKSDKTTTDLLKQTLNQLRNEVHSAVDEMDSLDDVENSMLYYNQAVILYYLRQHMEAISVGEKLYQFIEPFEEKFAHAVCFLLVDLYLLTFQTEKALHLLVVLEKMILQGNSNNKNGKNNETNSNANNKELFAQKGDGGVNVEAAKSKIHQYKVRAYIQMKSLKACKREIKSVMNTSGNSAPSLFLKSNFEYLRGNYRKAVKLLNSSNIAEYPGFMKTGECVRCMFWNNLGCIHFAMGKHNLGLFYFKKALHENDNACAQLPSENSDPGKKFSGRPMCTLLTNKRYELLYNCGIQLLHIGRPLAAFEYLVEAVQVYHSNPRLWLRLAECCIAANKGTSEQETKGLPSKKGIVQSIVGQGYHRKIVLASQSVQNLLYNDGESSAIPVASMEFAAICLRNALLLLPEDQLETKQENGSKASSQTVNTDSSGESSDVCSNKNHEGDKFIPAPPSSPLRRQEVENLRCSVLACIAYVALALGDNLMALNHAEKLLQQPRLSGSLKFLGHLYAAEALISLDRISDAITHLNPENVTDVSLGVSSNEQEQGSDKGENEPMESAGKQIPQCYPSSVTSARTMMLFNLGSAYCLRSEYDKARKCLHQAASMIHPKEIPPEAILLAVYLELQNGNTQLALQIIKRNQLLPSIRMMSDLRKKPLFQTMHQPMQPIQMPAFAAAQRK</sequence>
<dbReference type="EMBL" id="BC068748">
    <property type="protein sequence ID" value="AAH68748.1"/>
    <property type="molecule type" value="mRNA"/>
</dbReference>
<dbReference type="RefSeq" id="NP_001084582.1">
    <property type="nucleotide sequence ID" value="NM_001091113.1"/>
</dbReference>
<dbReference type="RefSeq" id="XP_018124159.1">
    <property type="nucleotide sequence ID" value="XM_018268670.1"/>
</dbReference>
<dbReference type="SMR" id="Q6NU53"/>
<dbReference type="DNASU" id="414534"/>
<dbReference type="GeneID" id="414534"/>
<dbReference type="KEGG" id="xla:414534"/>
<dbReference type="AGR" id="Xenbase:XB-GENE-5755077"/>
<dbReference type="CTD" id="414534"/>
<dbReference type="Xenbase" id="XB-GENE-5755077">
    <property type="gene designation" value="cnot10.S"/>
</dbReference>
<dbReference type="OMA" id="PECSRMY"/>
<dbReference type="OrthoDB" id="25157at2759"/>
<dbReference type="Proteomes" id="UP000186698">
    <property type="component" value="Chromosome 6S"/>
</dbReference>
<dbReference type="Bgee" id="414534">
    <property type="expression patterns" value="Expressed in gastrula and 19 other cell types or tissues"/>
</dbReference>
<dbReference type="GO" id="GO:0030014">
    <property type="term" value="C:CCR4-NOT complex"/>
    <property type="evidence" value="ECO:0000250"/>
    <property type="project" value="UniProtKB"/>
</dbReference>
<dbReference type="GO" id="GO:0005737">
    <property type="term" value="C:cytoplasm"/>
    <property type="evidence" value="ECO:0007669"/>
    <property type="project" value="UniProtKB-SubCell"/>
</dbReference>
<dbReference type="GO" id="GO:0005634">
    <property type="term" value="C:nucleus"/>
    <property type="evidence" value="ECO:0007669"/>
    <property type="project" value="UniProtKB-SubCell"/>
</dbReference>
<dbReference type="GO" id="GO:0006402">
    <property type="term" value="P:mRNA catabolic process"/>
    <property type="evidence" value="ECO:0000318"/>
    <property type="project" value="GO_Central"/>
</dbReference>
<dbReference type="GO" id="GO:0017148">
    <property type="term" value="P:negative regulation of translation"/>
    <property type="evidence" value="ECO:0000318"/>
    <property type="project" value="GO_Central"/>
</dbReference>
<dbReference type="GO" id="GO:0031047">
    <property type="term" value="P:regulatory ncRNA-mediated gene silencing"/>
    <property type="evidence" value="ECO:0007669"/>
    <property type="project" value="UniProtKB-KW"/>
</dbReference>
<dbReference type="FunFam" id="1.25.40.10:FF:000092">
    <property type="entry name" value="CCR4-NOT transcription complex subunit 10 isoform X1"/>
    <property type="match status" value="1"/>
</dbReference>
<dbReference type="Gene3D" id="1.25.40.10">
    <property type="entry name" value="Tetratricopeptide repeat domain"/>
    <property type="match status" value="2"/>
</dbReference>
<dbReference type="InterPro" id="IPR039740">
    <property type="entry name" value="CNOT10"/>
</dbReference>
<dbReference type="InterPro" id="IPR011990">
    <property type="entry name" value="TPR-like_helical_dom_sf"/>
</dbReference>
<dbReference type="InterPro" id="IPR019734">
    <property type="entry name" value="TPR_rpt"/>
</dbReference>
<dbReference type="PANTHER" id="PTHR12979">
    <property type="entry name" value="CCR4-NOT TRANSCRIPTION COMPLEX SUBUNIT 10"/>
    <property type="match status" value="1"/>
</dbReference>
<dbReference type="PANTHER" id="PTHR12979:SF5">
    <property type="entry name" value="CCR4-NOT TRANSCRIPTION COMPLEX SUBUNIT 10"/>
    <property type="match status" value="1"/>
</dbReference>
<dbReference type="SMART" id="SM00028">
    <property type="entry name" value="TPR"/>
    <property type="match status" value="6"/>
</dbReference>
<dbReference type="SUPFAM" id="SSF48452">
    <property type="entry name" value="TPR-like"/>
    <property type="match status" value="2"/>
</dbReference>
<accession>Q6NU53</accession>
<evidence type="ECO:0000250" key="1"/>
<evidence type="ECO:0000256" key="2">
    <source>
        <dbReference type="SAM" id="MobiDB-lite"/>
    </source>
</evidence>
<evidence type="ECO:0000305" key="3"/>